<gene>
    <name type="primary">Nfkbib</name>
    <name type="synonym">Ikbb</name>
</gene>
<organism>
    <name type="scientific">Rattus norvegicus</name>
    <name type="common">Rat</name>
    <dbReference type="NCBI Taxonomy" id="10116"/>
    <lineage>
        <taxon>Eukaryota</taxon>
        <taxon>Metazoa</taxon>
        <taxon>Chordata</taxon>
        <taxon>Craniata</taxon>
        <taxon>Vertebrata</taxon>
        <taxon>Euteleostomi</taxon>
        <taxon>Mammalia</taxon>
        <taxon>Eutheria</taxon>
        <taxon>Euarchontoglires</taxon>
        <taxon>Glires</taxon>
        <taxon>Rodentia</taxon>
        <taxon>Myomorpha</taxon>
        <taxon>Muroidea</taxon>
        <taxon>Muridae</taxon>
        <taxon>Murinae</taxon>
        <taxon>Rattus</taxon>
    </lineage>
</organism>
<reference key="1">
    <citation type="journal article" date="2000" name="J. Biol. Chem.">
        <title>Inhibitory and stimulatory effects of lactacystin on expression of nitric oxide synthase type 2 in brain glial cells: the role of I kappa B-beta.</title>
        <authorList>
            <person name="Stasiolek M."/>
            <person name="Gavrilyuk V."/>
            <person name="Sharp A."/>
            <person name="Horvath P."/>
            <person name="Selmaj K."/>
            <person name="Feinstein D.L."/>
        </authorList>
    </citation>
    <scope>NUCLEOTIDE SEQUENCE [MRNA]</scope>
    <scope>CHARACTERIZATION</scope>
</reference>
<reference key="2">
    <citation type="journal article" date="2006" name="Am. J. Physiol.">
        <title>Ribosomal S6 kinase-1 modulates interleukin-1beta-induced persistent activation of NF-kappaB through phosphorylation of IkappaBbeta.</title>
        <authorList>
            <person name="Xu S."/>
            <person name="Bayat H."/>
            <person name="Hou X."/>
            <person name="Jiang B."/>
        </authorList>
    </citation>
    <scope>PHOSPHORYLATION AT SER-19 AND SER-23</scope>
</reference>
<accession>Q9JIA3</accession>
<sequence length="359" mass="38081">MAGVACLGKTADADEWCDSGLGSLGPDAAAPGGPGLVAELSPELSWAPLVFGYVTEDGDTALHLAVIHQHEPFLDFLLGFSAGTEYLDLQNDLGQTALHLAAILGEASTVEKLYAAGAGVLVTERGGHTALHLACRVRAHTCAYVLLQPRPSHPRDASDTYLTQSQDHTPDTSHAPVATDPQPNPGNEEELRDEDWRLQLEAENYDGHTPLHVAVIHKDAEMVQLLRDAGADLNKPEPTCGRTPLHLAVEGQAAGVLALLLKAGADPTARMYGGRTPLGSALLRPNPVLARLLRAHGAPEPEDKDDKLSPCSNSSSDSDSDNRDEGDEYDDIVVHSRRSQNQPPPSPAAKPLPDDPNPA</sequence>
<name>IKBB_RAT</name>
<keyword id="KW-0040">ANK repeat</keyword>
<keyword id="KW-0963">Cytoplasm</keyword>
<keyword id="KW-0539">Nucleus</keyword>
<keyword id="KW-0597">Phosphoprotein</keyword>
<keyword id="KW-1185">Reference proteome</keyword>
<keyword id="KW-0677">Repeat</keyword>
<proteinExistence type="evidence at protein level"/>
<feature type="chain" id="PRO_0000067006" description="NF-kappa-B inhibitor beta">
    <location>
        <begin position="1"/>
        <end position="359"/>
    </location>
</feature>
<feature type="repeat" description="ANK 1">
    <location>
        <begin position="57"/>
        <end position="86"/>
    </location>
</feature>
<feature type="repeat" description="ANK 2">
    <location>
        <begin position="93"/>
        <end position="122"/>
    </location>
</feature>
<feature type="repeat" description="ANK 3">
    <location>
        <begin position="126"/>
        <end position="155"/>
    </location>
</feature>
<feature type="repeat" description="ANK 4">
    <location>
        <begin position="206"/>
        <end position="235"/>
    </location>
</feature>
<feature type="repeat" description="ANK 5">
    <location>
        <begin position="240"/>
        <end position="269"/>
    </location>
</feature>
<feature type="repeat" description="ANK 6">
    <location>
        <begin position="273"/>
        <end position="302"/>
    </location>
</feature>
<feature type="region of interest" description="Disordered" evidence="3">
    <location>
        <begin position="153"/>
        <end position="192"/>
    </location>
</feature>
<feature type="region of interest" description="Disordered" evidence="3">
    <location>
        <begin position="298"/>
        <end position="359"/>
    </location>
</feature>
<feature type="compositionally biased region" description="Basic and acidic residues" evidence="3">
    <location>
        <begin position="298"/>
        <end position="308"/>
    </location>
</feature>
<feature type="compositionally biased region" description="Acidic residues" evidence="3">
    <location>
        <begin position="318"/>
        <end position="331"/>
    </location>
</feature>
<feature type="compositionally biased region" description="Pro residues" evidence="3">
    <location>
        <begin position="342"/>
        <end position="359"/>
    </location>
</feature>
<feature type="modified residue" description="Phosphoserine; by RPS6KA1" evidence="4">
    <location>
        <position position="19"/>
    </location>
</feature>
<feature type="modified residue" description="Phosphoserine; by RPS6KA1" evidence="4">
    <location>
        <position position="23"/>
    </location>
</feature>
<feature type="modified residue" description="Phosphoserine" evidence="2">
    <location>
        <position position="318"/>
    </location>
</feature>
<protein>
    <recommendedName>
        <fullName>NF-kappa-B inhibitor beta</fullName>
        <shortName>NF-kappa-BIB</shortName>
    </recommendedName>
    <alternativeName>
        <fullName>I-kappa-B-beta</fullName>
        <shortName>IkB-B</shortName>
        <shortName>IkB-beta</shortName>
        <shortName>IkappaBbeta</shortName>
    </alternativeName>
</protein>
<evidence type="ECO:0000250" key="1"/>
<evidence type="ECO:0000250" key="2">
    <source>
        <dbReference type="UniProtKB" id="Q15653"/>
    </source>
</evidence>
<evidence type="ECO:0000256" key="3">
    <source>
        <dbReference type="SAM" id="MobiDB-lite"/>
    </source>
</evidence>
<evidence type="ECO:0000269" key="4">
    <source>
    </source>
</evidence>
<evidence type="ECO:0000305" key="5"/>
<comment type="function">
    <text>Inhibits NF-kappa-B by complexing with and trapping it in the cytoplasm. However, the unphosphorylated form resynthesized after cell stimulation is able to bind NF-kappa-B allowing its transport to the nucleus and protecting it to further NFKBIA-dependent inactivation. Association with inhibitor kappa B-interacting NKIRAS1 and NKIRAS2 prevent its phosphorylation rendering it more resistant to degradation, explaining its slower degradation.</text>
</comment>
<comment type="subunit">
    <text evidence="2">Interacts with THRB (via ligand-binding domain). Interacts with RELA and REL. Interacts with COMMD1. Interacts with inhibitor kappa B-interacting Ras-like NKIRAS1 and NKIRAS2.</text>
</comment>
<comment type="subcellular location">
    <subcellularLocation>
        <location evidence="1">Cytoplasm</location>
    </subcellularLocation>
    <subcellularLocation>
        <location evidence="1">Nucleus</location>
    </subcellularLocation>
</comment>
<comment type="PTM">
    <text evidence="1">Phosphorylated by RPS6KA1; followed by degradation. Interaction with NKIRAS1 and NKIRAS2 probably prevents phosphorylation (By similarity).</text>
</comment>
<comment type="similarity">
    <text evidence="5">Belongs to the NF-kappa-B inhibitor family.</text>
</comment>
<dbReference type="EMBL" id="AF246634">
    <property type="protein sequence ID" value="AAF64191.1"/>
    <property type="molecule type" value="mRNA"/>
</dbReference>
<dbReference type="SMR" id="Q9JIA3"/>
<dbReference type="FunCoup" id="Q9JIA3">
    <property type="interactions" value="347"/>
</dbReference>
<dbReference type="STRING" id="10116.ENSRNOP00000027212"/>
<dbReference type="iPTMnet" id="Q9JIA3"/>
<dbReference type="PhosphoSitePlus" id="Q9JIA3"/>
<dbReference type="PaxDb" id="10116-ENSRNOP00000027212"/>
<dbReference type="UCSC" id="RGD:621887">
    <property type="organism name" value="rat"/>
</dbReference>
<dbReference type="AGR" id="RGD:621887"/>
<dbReference type="RGD" id="621887">
    <property type="gene designation" value="Nfkbib"/>
</dbReference>
<dbReference type="eggNOG" id="KOG0504">
    <property type="taxonomic scope" value="Eukaryota"/>
</dbReference>
<dbReference type="InParanoid" id="Q9JIA3"/>
<dbReference type="PhylomeDB" id="Q9JIA3"/>
<dbReference type="Reactome" id="R-RNO-1169091">
    <property type="pathway name" value="Activation of NF-kappaB in B cells"/>
</dbReference>
<dbReference type="Reactome" id="R-RNO-1810476">
    <property type="pathway name" value="RIP-mediated NFkB activation via ZBP1"/>
</dbReference>
<dbReference type="Reactome" id="R-RNO-445989">
    <property type="pathway name" value="TAK1-dependent IKK and NF-kappa-B activation"/>
</dbReference>
<dbReference type="Reactome" id="R-RNO-933542">
    <property type="pathway name" value="TRAF6 mediated NF-kB activation"/>
</dbReference>
<dbReference type="PRO" id="PR:Q9JIA3"/>
<dbReference type="Proteomes" id="UP000002494">
    <property type="component" value="Unplaced"/>
</dbReference>
<dbReference type="GO" id="GO:0005737">
    <property type="term" value="C:cytoplasm"/>
    <property type="evidence" value="ECO:0007669"/>
    <property type="project" value="UniProtKB-SubCell"/>
</dbReference>
<dbReference type="GO" id="GO:0005634">
    <property type="term" value="C:nucleus"/>
    <property type="evidence" value="ECO:0007669"/>
    <property type="project" value="UniProtKB-SubCell"/>
</dbReference>
<dbReference type="GO" id="GO:0071222">
    <property type="term" value="P:cellular response to lipopolysaccharide"/>
    <property type="evidence" value="ECO:0000266"/>
    <property type="project" value="RGD"/>
</dbReference>
<dbReference type="GO" id="GO:0006954">
    <property type="term" value="P:inflammatory response"/>
    <property type="evidence" value="ECO:0000266"/>
    <property type="project" value="RGD"/>
</dbReference>
<dbReference type="GO" id="GO:0043122">
    <property type="term" value="P:regulation of canonical NF-kappaB signal transduction"/>
    <property type="evidence" value="ECO:0000266"/>
    <property type="project" value="RGD"/>
</dbReference>
<dbReference type="Gene3D" id="1.25.40.20">
    <property type="entry name" value="Ankyrin repeat-containing domain"/>
    <property type="match status" value="1"/>
</dbReference>
<dbReference type="InterPro" id="IPR002110">
    <property type="entry name" value="Ankyrin_rpt"/>
</dbReference>
<dbReference type="InterPro" id="IPR036770">
    <property type="entry name" value="Ankyrin_rpt-contain_sf"/>
</dbReference>
<dbReference type="PANTHER" id="PTHR47303">
    <property type="match status" value="1"/>
</dbReference>
<dbReference type="PANTHER" id="PTHR47303:SF1">
    <property type="entry name" value="NF-KAPPA-B INHIBITOR BETA"/>
    <property type="match status" value="1"/>
</dbReference>
<dbReference type="Pfam" id="PF00023">
    <property type="entry name" value="Ank"/>
    <property type="match status" value="1"/>
</dbReference>
<dbReference type="Pfam" id="PF12796">
    <property type="entry name" value="Ank_2"/>
    <property type="match status" value="2"/>
</dbReference>
<dbReference type="PRINTS" id="PR01415">
    <property type="entry name" value="ANKYRIN"/>
</dbReference>
<dbReference type="SMART" id="SM00248">
    <property type="entry name" value="ANK"/>
    <property type="match status" value="6"/>
</dbReference>
<dbReference type="SUPFAM" id="SSF48403">
    <property type="entry name" value="Ankyrin repeat"/>
    <property type="match status" value="1"/>
</dbReference>
<dbReference type="PROSITE" id="PS50297">
    <property type="entry name" value="ANK_REP_REGION"/>
    <property type="match status" value="1"/>
</dbReference>
<dbReference type="PROSITE" id="PS50088">
    <property type="entry name" value="ANK_REPEAT"/>
    <property type="match status" value="4"/>
</dbReference>